<sequence length="130" mass="14774">MVRISVLNDGLKSMYNAEKRGKRQVMIRPSSKVIIKFLIVMQKHGYIGEFEYVDDHRSGKIVVELNGRLNKCGVISPRFDVGVKEIEGWTARLLPSRQFGFIVLTTSAGIMDHEEARRKNVGGKVLGFFY</sequence>
<proteinExistence type="evidence at transcript level"/>
<keyword id="KW-1185">Reference proteome</keyword>
<keyword id="KW-0687">Ribonucleoprotein</keyword>
<keyword id="KW-0689">Ribosomal protein</keyword>
<name>R15A4_ARATH</name>
<feature type="chain" id="PRO_0000250169" description="Small ribosomal subunit protein uS8x">
    <location>
        <begin position="1"/>
        <end position="130"/>
    </location>
</feature>
<dbReference type="EMBL" id="AL355775">
    <property type="protein sequence ID" value="CAB90931.1"/>
    <property type="molecule type" value="Genomic_DNA"/>
</dbReference>
<dbReference type="EMBL" id="CP002686">
    <property type="protein sequence ID" value="AEE78104.1"/>
    <property type="molecule type" value="Genomic_DNA"/>
</dbReference>
<dbReference type="EMBL" id="AY045837">
    <property type="protein sequence ID" value="AAK76511.1"/>
    <property type="molecule type" value="mRNA"/>
</dbReference>
<dbReference type="EMBL" id="AY091373">
    <property type="protein sequence ID" value="AAM14312.1"/>
    <property type="molecule type" value="mRNA"/>
</dbReference>
<dbReference type="PIR" id="T49245">
    <property type="entry name" value="T49245"/>
</dbReference>
<dbReference type="RefSeq" id="NP_190190.1">
    <property type="nucleotide sequence ID" value="NM_114473.6"/>
</dbReference>
<dbReference type="SMR" id="Q9LX88"/>
<dbReference type="BioGRID" id="9067">
    <property type="interactions" value="151"/>
</dbReference>
<dbReference type="FunCoup" id="Q9LX88">
    <property type="interactions" value="3188"/>
</dbReference>
<dbReference type="STRING" id="3702.Q9LX88"/>
<dbReference type="PaxDb" id="3702-AT3G46040.1"/>
<dbReference type="ProteomicsDB" id="225937"/>
<dbReference type="EnsemblPlants" id="AT3G46040.1">
    <property type="protein sequence ID" value="AT3G46040.1"/>
    <property type="gene ID" value="AT3G46040"/>
</dbReference>
<dbReference type="GeneID" id="823747"/>
<dbReference type="Gramene" id="AT3G46040.1">
    <property type="protein sequence ID" value="AT3G46040.1"/>
    <property type="gene ID" value="AT3G46040"/>
</dbReference>
<dbReference type="KEGG" id="ath:AT3G46040"/>
<dbReference type="Araport" id="AT3G46040"/>
<dbReference type="TAIR" id="AT3G46040">
    <property type="gene designation" value="RPS15AD"/>
</dbReference>
<dbReference type="eggNOG" id="KOG1754">
    <property type="taxonomic scope" value="Eukaryota"/>
</dbReference>
<dbReference type="HOGENOM" id="CLU_098428_1_1_1"/>
<dbReference type="InParanoid" id="Q9LX88"/>
<dbReference type="OMA" id="RIFFRTH"/>
<dbReference type="OrthoDB" id="1031653at2759"/>
<dbReference type="PhylomeDB" id="Q9LX88"/>
<dbReference type="PRO" id="PR:Q9LX88"/>
<dbReference type="Proteomes" id="UP000006548">
    <property type="component" value="Chromosome 3"/>
</dbReference>
<dbReference type="ExpressionAtlas" id="Q9LX88">
    <property type="expression patterns" value="baseline and differential"/>
</dbReference>
<dbReference type="GO" id="GO:0005829">
    <property type="term" value="C:cytosol"/>
    <property type="evidence" value="ECO:0007005"/>
    <property type="project" value="TAIR"/>
</dbReference>
<dbReference type="GO" id="GO:0022626">
    <property type="term" value="C:cytosolic ribosome"/>
    <property type="evidence" value="ECO:0007005"/>
    <property type="project" value="TAIR"/>
</dbReference>
<dbReference type="GO" id="GO:0022627">
    <property type="term" value="C:cytosolic small ribosomal subunit"/>
    <property type="evidence" value="ECO:0007005"/>
    <property type="project" value="TAIR"/>
</dbReference>
<dbReference type="GO" id="GO:0003735">
    <property type="term" value="F:structural constituent of ribosome"/>
    <property type="evidence" value="ECO:0000314"/>
    <property type="project" value="CAFA"/>
</dbReference>
<dbReference type="GO" id="GO:0006412">
    <property type="term" value="P:translation"/>
    <property type="evidence" value="ECO:0007669"/>
    <property type="project" value="InterPro"/>
</dbReference>
<dbReference type="FunFam" id="3.30.1370.30:FF:000001">
    <property type="entry name" value="40S ribosomal protein S15a"/>
    <property type="match status" value="1"/>
</dbReference>
<dbReference type="FunFam" id="3.30.1490.10:FF:000002">
    <property type="entry name" value="40S ribosomal protein S15a"/>
    <property type="match status" value="1"/>
</dbReference>
<dbReference type="Gene3D" id="3.30.1370.30">
    <property type="match status" value="1"/>
</dbReference>
<dbReference type="Gene3D" id="3.30.1490.10">
    <property type="match status" value="1"/>
</dbReference>
<dbReference type="HAMAP" id="MF_01302_A">
    <property type="entry name" value="Ribosomal_uS8_A"/>
    <property type="match status" value="1"/>
</dbReference>
<dbReference type="InterPro" id="IPR000630">
    <property type="entry name" value="Ribosomal_uS8"/>
</dbReference>
<dbReference type="InterPro" id="IPR047863">
    <property type="entry name" value="Ribosomal_uS8_CS"/>
</dbReference>
<dbReference type="InterPro" id="IPR035987">
    <property type="entry name" value="Ribosomal_uS8_sf"/>
</dbReference>
<dbReference type="NCBIfam" id="NF003115">
    <property type="entry name" value="PRK04034.1"/>
    <property type="match status" value="1"/>
</dbReference>
<dbReference type="PANTHER" id="PTHR11758">
    <property type="entry name" value="40S RIBOSOMAL PROTEIN S15A"/>
    <property type="match status" value="1"/>
</dbReference>
<dbReference type="Pfam" id="PF00410">
    <property type="entry name" value="Ribosomal_S8"/>
    <property type="match status" value="1"/>
</dbReference>
<dbReference type="SUPFAM" id="SSF56047">
    <property type="entry name" value="Ribosomal protein S8"/>
    <property type="match status" value="1"/>
</dbReference>
<dbReference type="PROSITE" id="PS00053">
    <property type="entry name" value="RIBOSOMAL_S8"/>
    <property type="match status" value="1"/>
</dbReference>
<organism>
    <name type="scientific">Arabidopsis thaliana</name>
    <name type="common">Mouse-ear cress</name>
    <dbReference type="NCBI Taxonomy" id="3702"/>
    <lineage>
        <taxon>Eukaryota</taxon>
        <taxon>Viridiplantae</taxon>
        <taxon>Streptophyta</taxon>
        <taxon>Embryophyta</taxon>
        <taxon>Tracheophyta</taxon>
        <taxon>Spermatophyta</taxon>
        <taxon>Magnoliopsida</taxon>
        <taxon>eudicotyledons</taxon>
        <taxon>Gunneridae</taxon>
        <taxon>Pentapetalae</taxon>
        <taxon>rosids</taxon>
        <taxon>malvids</taxon>
        <taxon>Brassicales</taxon>
        <taxon>Brassicaceae</taxon>
        <taxon>Camelineae</taxon>
        <taxon>Arabidopsis</taxon>
    </lineage>
</organism>
<gene>
    <name type="primary">RPS15AD</name>
    <name type="ordered locus">At3g46040</name>
    <name type="ORF">F12M12_10</name>
</gene>
<evidence type="ECO:0000303" key="1">
    <source>
    </source>
</evidence>
<evidence type="ECO:0000305" key="2"/>
<protein>
    <recommendedName>
        <fullName evidence="1">Small ribosomal subunit protein uS8x</fullName>
    </recommendedName>
    <alternativeName>
        <fullName>40S ribosomal protein S15a-4</fullName>
    </alternativeName>
</protein>
<accession>Q9LX88</accession>
<comment type="similarity">
    <text evidence="2">Belongs to the universal ribosomal protein uS8 family.</text>
</comment>
<reference key="1">
    <citation type="journal article" date="2000" name="Nature">
        <title>Sequence and analysis of chromosome 3 of the plant Arabidopsis thaliana.</title>
        <authorList>
            <person name="Salanoubat M."/>
            <person name="Lemcke K."/>
            <person name="Rieger M."/>
            <person name="Ansorge W."/>
            <person name="Unseld M."/>
            <person name="Fartmann B."/>
            <person name="Valle G."/>
            <person name="Bloecker H."/>
            <person name="Perez-Alonso M."/>
            <person name="Obermaier B."/>
            <person name="Delseny M."/>
            <person name="Boutry M."/>
            <person name="Grivell L.A."/>
            <person name="Mache R."/>
            <person name="Puigdomenech P."/>
            <person name="De Simone V."/>
            <person name="Choisne N."/>
            <person name="Artiguenave F."/>
            <person name="Robert C."/>
            <person name="Brottier P."/>
            <person name="Wincker P."/>
            <person name="Cattolico L."/>
            <person name="Weissenbach J."/>
            <person name="Saurin W."/>
            <person name="Quetier F."/>
            <person name="Schaefer M."/>
            <person name="Mueller-Auer S."/>
            <person name="Gabel C."/>
            <person name="Fuchs M."/>
            <person name="Benes V."/>
            <person name="Wurmbach E."/>
            <person name="Drzonek H."/>
            <person name="Erfle H."/>
            <person name="Jordan N."/>
            <person name="Bangert S."/>
            <person name="Wiedelmann R."/>
            <person name="Kranz H."/>
            <person name="Voss H."/>
            <person name="Holland R."/>
            <person name="Brandt P."/>
            <person name="Nyakatura G."/>
            <person name="Vezzi A."/>
            <person name="D'Angelo M."/>
            <person name="Pallavicini A."/>
            <person name="Toppo S."/>
            <person name="Simionati B."/>
            <person name="Conrad A."/>
            <person name="Hornischer K."/>
            <person name="Kauer G."/>
            <person name="Loehnert T.-H."/>
            <person name="Nordsiek G."/>
            <person name="Reichelt J."/>
            <person name="Scharfe M."/>
            <person name="Schoen O."/>
            <person name="Bargues M."/>
            <person name="Terol J."/>
            <person name="Climent J."/>
            <person name="Navarro P."/>
            <person name="Collado C."/>
            <person name="Perez-Perez A."/>
            <person name="Ottenwaelder B."/>
            <person name="Duchemin D."/>
            <person name="Cooke R."/>
            <person name="Laudie M."/>
            <person name="Berger-Llauro C."/>
            <person name="Purnelle B."/>
            <person name="Masuy D."/>
            <person name="de Haan M."/>
            <person name="Maarse A.C."/>
            <person name="Alcaraz J.-P."/>
            <person name="Cottet A."/>
            <person name="Casacuberta E."/>
            <person name="Monfort A."/>
            <person name="Argiriou A."/>
            <person name="Flores M."/>
            <person name="Liguori R."/>
            <person name="Vitale D."/>
            <person name="Mannhaupt G."/>
            <person name="Haase D."/>
            <person name="Schoof H."/>
            <person name="Rudd S."/>
            <person name="Zaccaria P."/>
            <person name="Mewes H.-W."/>
            <person name="Mayer K.F.X."/>
            <person name="Kaul S."/>
            <person name="Town C.D."/>
            <person name="Koo H.L."/>
            <person name="Tallon L.J."/>
            <person name="Jenkins J."/>
            <person name="Rooney T."/>
            <person name="Rizzo M."/>
            <person name="Walts A."/>
            <person name="Utterback T."/>
            <person name="Fujii C.Y."/>
            <person name="Shea T.P."/>
            <person name="Creasy T.H."/>
            <person name="Haas B."/>
            <person name="Maiti R."/>
            <person name="Wu D."/>
            <person name="Peterson J."/>
            <person name="Van Aken S."/>
            <person name="Pai G."/>
            <person name="Militscher J."/>
            <person name="Sellers P."/>
            <person name="Gill J.E."/>
            <person name="Feldblyum T.V."/>
            <person name="Preuss D."/>
            <person name="Lin X."/>
            <person name="Nierman W.C."/>
            <person name="Salzberg S.L."/>
            <person name="White O."/>
            <person name="Venter J.C."/>
            <person name="Fraser C.M."/>
            <person name="Kaneko T."/>
            <person name="Nakamura Y."/>
            <person name="Sato S."/>
            <person name="Kato T."/>
            <person name="Asamizu E."/>
            <person name="Sasamoto S."/>
            <person name="Kimura T."/>
            <person name="Idesawa K."/>
            <person name="Kawashima K."/>
            <person name="Kishida Y."/>
            <person name="Kiyokawa C."/>
            <person name="Kohara M."/>
            <person name="Matsumoto M."/>
            <person name="Matsuno A."/>
            <person name="Muraki A."/>
            <person name="Nakayama S."/>
            <person name="Nakazaki N."/>
            <person name="Shinpo S."/>
            <person name="Takeuchi C."/>
            <person name="Wada T."/>
            <person name="Watanabe A."/>
            <person name="Yamada M."/>
            <person name="Yasuda M."/>
            <person name="Tabata S."/>
        </authorList>
    </citation>
    <scope>NUCLEOTIDE SEQUENCE [LARGE SCALE GENOMIC DNA]</scope>
    <source>
        <strain>cv. Columbia</strain>
    </source>
</reference>
<reference key="2">
    <citation type="journal article" date="2017" name="Plant J.">
        <title>Araport11: a complete reannotation of the Arabidopsis thaliana reference genome.</title>
        <authorList>
            <person name="Cheng C.Y."/>
            <person name="Krishnakumar V."/>
            <person name="Chan A.P."/>
            <person name="Thibaud-Nissen F."/>
            <person name="Schobel S."/>
            <person name="Town C.D."/>
        </authorList>
    </citation>
    <scope>GENOME REANNOTATION</scope>
    <source>
        <strain>cv. Columbia</strain>
    </source>
</reference>
<reference key="3">
    <citation type="journal article" date="2003" name="Science">
        <title>Empirical analysis of transcriptional activity in the Arabidopsis genome.</title>
        <authorList>
            <person name="Yamada K."/>
            <person name="Lim J."/>
            <person name="Dale J.M."/>
            <person name="Chen H."/>
            <person name="Shinn P."/>
            <person name="Palm C.J."/>
            <person name="Southwick A.M."/>
            <person name="Wu H.C."/>
            <person name="Kim C.J."/>
            <person name="Nguyen M."/>
            <person name="Pham P.K."/>
            <person name="Cheuk R.F."/>
            <person name="Karlin-Newmann G."/>
            <person name="Liu S.X."/>
            <person name="Lam B."/>
            <person name="Sakano H."/>
            <person name="Wu T."/>
            <person name="Yu G."/>
            <person name="Miranda M."/>
            <person name="Quach H.L."/>
            <person name="Tripp M."/>
            <person name="Chang C.H."/>
            <person name="Lee J.M."/>
            <person name="Toriumi M.J."/>
            <person name="Chan M.M."/>
            <person name="Tang C.C."/>
            <person name="Onodera C.S."/>
            <person name="Deng J.M."/>
            <person name="Akiyama K."/>
            <person name="Ansari Y."/>
            <person name="Arakawa T."/>
            <person name="Banh J."/>
            <person name="Banno F."/>
            <person name="Bowser L."/>
            <person name="Brooks S.Y."/>
            <person name="Carninci P."/>
            <person name="Chao Q."/>
            <person name="Choy N."/>
            <person name="Enju A."/>
            <person name="Goldsmith A.D."/>
            <person name="Gurjal M."/>
            <person name="Hansen N.F."/>
            <person name="Hayashizaki Y."/>
            <person name="Johnson-Hopson C."/>
            <person name="Hsuan V.W."/>
            <person name="Iida K."/>
            <person name="Karnes M."/>
            <person name="Khan S."/>
            <person name="Koesema E."/>
            <person name="Ishida J."/>
            <person name="Jiang P.X."/>
            <person name="Jones T."/>
            <person name="Kawai J."/>
            <person name="Kamiya A."/>
            <person name="Meyers C."/>
            <person name="Nakajima M."/>
            <person name="Narusaka M."/>
            <person name="Seki M."/>
            <person name="Sakurai T."/>
            <person name="Satou M."/>
            <person name="Tamse R."/>
            <person name="Vaysberg M."/>
            <person name="Wallender E.K."/>
            <person name="Wong C."/>
            <person name="Yamamura Y."/>
            <person name="Yuan S."/>
            <person name="Shinozaki K."/>
            <person name="Davis R.W."/>
            <person name="Theologis A."/>
            <person name="Ecker J.R."/>
        </authorList>
    </citation>
    <scope>NUCLEOTIDE SEQUENCE [LARGE SCALE MRNA]</scope>
    <source>
        <strain>cv. Columbia</strain>
    </source>
</reference>
<reference key="4">
    <citation type="journal article" date="2001" name="Plant Physiol.">
        <title>The organization of cytoplasmic ribosomal protein genes in the Arabidopsis genome.</title>
        <authorList>
            <person name="Barakat A."/>
            <person name="Szick-Miranda K."/>
            <person name="Chang I.-F."/>
            <person name="Guyot R."/>
            <person name="Blanc G."/>
            <person name="Cooke R."/>
            <person name="Delseny M."/>
            <person name="Bailey-Serres J."/>
        </authorList>
    </citation>
    <scope>GENE FAMILY ORGANIZATION</scope>
    <scope>NOMENCLATURE</scope>
</reference>
<reference key="5">
    <citation type="journal article" date="2023" name="Plant Cell">
        <title>An updated nomenclature for plant ribosomal protein genes.</title>
        <authorList>
            <person name="Scarpin M.R."/>
            <person name="Busche M."/>
            <person name="Martinez R.E."/>
            <person name="Harper L.C."/>
            <person name="Reiser L."/>
            <person name="Szakonyi D."/>
            <person name="Merchante C."/>
            <person name="Lan T."/>
            <person name="Xiong W."/>
            <person name="Mo B."/>
            <person name="Tang G."/>
            <person name="Chen X."/>
            <person name="Bailey-Serres J."/>
            <person name="Browning K.S."/>
            <person name="Brunkard J.O."/>
        </authorList>
    </citation>
    <scope>NOMENCLATURE</scope>
</reference>